<accession>Q3AYW4</accession>
<dbReference type="EC" id="3.6.1.7"/>
<dbReference type="EMBL" id="CP000097">
    <property type="protein sequence ID" value="ABB25713.1"/>
    <property type="molecule type" value="Genomic_DNA"/>
</dbReference>
<dbReference type="RefSeq" id="WP_011359553.1">
    <property type="nucleotide sequence ID" value="NC_007513.1"/>
</dbReference>
<dbReference type="SMR" id="Q3AYW4"/>
<dbReference type="STRING" id="316279.Syncc9902_0745"/>
<dbReference type="KEGG" id="sye:Syncc9902_0745"/>
<dbReference type="eggNOG" id="COG1254">
    <property type="taxonomic scope" value="Bacteria"/>
</dbReference>
<dbReference type="HOGENOM" id="CLU_141932_1_0_3"/>
<dbReference type="OrthoDB" id="9808093at2"/>
<dbReference type="Proteomes" id="UP000002712">
    <property type="component" value="Chromosome"/>
</dbReference>
<dbReference type="GO" id="GO:0003998">
    <property type="term" value="F:acylphosphatase activity"/>
    <property type="evidence" value="ECO:0007669"/>
    <property type="project" value="UniProtKB-EC"/>
</dbReference>
<dbReference type="Gene3D" id="3.30.70.100">
    <property type="match status" value="1"/>
</dbReference>
<dbReference type="InterPro" id="IPR020456">
    <property type="entry name" value="Acylphosphatase"/>
</dbReference>
<dbReference type="InterPro" id="IPR001792">
    <property type="entry name" value="Acylphosphatase-like_dom"/>
</dbReference>
<dbReference type="InterPro" id="IPR036046">
    <property type="entry name" value="Acylphosphatase-like_dom_sf"/>
</dbReference>
<dbReference type="InterPro" id="IPR017968">
    <property type="entry name" value="Acylphosphatase_CS"/>
</dbReference>
<dbReference type="NCBIfam" id="NF011023">
    <property type="entry name" value="PRK14452.1"/>
    <property type="match status" value="1"/>
</dbReference>
<dbReference type="PANTHER" id="PTHR47268">
    <property type="entry name" value="ACYLPHOSPHATASE"/>
    <property type="match status" value="1"/>
</dbReference>
<dbReference type="PANTHER" id="PTHR47268:SF4">
    <property type="entry name" value="ACYLPHOSPHATASE"/>
    <property type="match status" value="1"/>
</dbReference>
<dbReference type="Pfam" id="PF00708">
    <property type="entry name" value="Acylphosphatase"/>
    <property type="match status" value="1"/>
</dbReference>
<dbReference type="PRINTS" id="PR00112">
    <property type="entry name" value="ACYLPHPHTASE"/>
</dbReference>
<dbReference type="SUPFAM" id="SSF54975">
    <property type="entry name" value="Acylphosphatase/BLUF domain-like"/>
    <property type="match status" value="1"/>
</dbReference>
<dbReference type="PROSITE" id="PS00150">
    <property type="entry name" value="ACYLPHOSPHATASE_1"/>
    <property type="match status" value="1"/>
</dbReference>
<dbReference type="PROSITE" id="PS00151">
    <property type="entry name" value="ACYLPHOSPHATASE_2"/>
    <property type="match status" value="1"/>
</dbReference>
<dbReference type="PROSITE" id="PS51160">
    <property type="entry name" value="ACYLPHOSPHATASE_3"/>
    <property type="match status" value="1"/>
</dbReference>
<evidence type="ECO:0000255" key="1">
    <source>
        <dbReference type="PROSITE-ProRule" id="PRU00520"/>
    </source>
</evidence>
<evidence type="ECO:0000305" key="2"/>
<feature type="chain" id="PRO_0000326824" description="Acylphosphatase">
    <location>
        <begin position="1"/>
        <end position="117"/>
    </location>
</feature>
<feature type="domain" description="Acylphosphatase-like" evidence="1">
    <location>
        <begin position="31"/>
        <end position="117"/>
    </location>
</feature>
<feature type="active site" evidence="1">
    <location>
        <position position="46"/>
    </location>
</feature>
<feature type="active site" evidence="1">
    <location>
        <position position="64"/>
    </location>
</feature>
<gene>
    <name type="primary">acyP</name>
    <name type="ordered locus">Syncc9902_0745</name>
</gene>
<comment type="catalytic activity">
    <reaction>
        <text>an acyl phosphate + H2O = a carboxylate + phosphate + H(+)</text>
        <dbReference type="Rhea" id="RHEA:14965"/>
        <dbReference type="ChEBI" id="CHEBI:15377"/>
        <dbReference type="ChEBI" id="CHEBI:15378"/>
        <dbReference type="ChEBI" id="CHEBI:29067"/>
        <dbReference type="ChEBI" id="CHEBI:43474"/>
        <dbReference type="ChEBI" id="CHEBI:59918"/>
        <dbReference type="EC" id="3.6.1.7"/>
    </reaction>
</comment>
<comment type="similarity">
    <text evidence="2">Belongs to the acylphosphatase family.</text>
</comment>
<keyword id="KW-0378">Hydrolase</keyword>
<keyword id="KW-1185">Reference proteome</keyword>
<name>ACYP_SYNS9</name>
<sequence>MARRTRNRSEIIARRFVSRQQPTRTQPFVERWRWIIQGQVQGVGFRASCSRRALDMGLKGWVRNLQDGSVEVQAEGPPIALAELRAWCEKGPLGAQVKRVKPCQMPVRGDDWFEVRY</sequence>
<reference key="1">
    <citation type="submission" date="2005-08" db="EMBL/GenBank/DDBJ databases">
        <title>Complete sequence of Synechococcus sp. CC9902.</title>
        <authorList>
            <person name="Copeland A."/>
            <person name="Lucas S."/>
            <person name="Lapidus A."/>
            <person name="Barry K."/>
            <person name="Detter J.C."/>
            <person name="Glavina T."/>
            <person name="Hammon N."/>
            <person name="Israni S."/>
            <person name="Pitluck S."/>
            <person name="Martinez M."/>
            <person name="Schmutz J."/>
            <person name="Larimer F."/>
            <person name="Land M."/>
            <person name="Kyrpides N."/>
            <person name="Ivanova N."/>
            <person name="Richardson P."/>
        </authorList>
    </citation>
    <scope>NUCLEOTIDE SEQUENCE [LARGE SCALE GENOMIC DNA]</scope>
    <source>
        <strain>CC9902</strain>
    </source>
</reference>
<organism>
    <name type="scientific">Synechococcus sp. (strain CC9902)</name>
    <dbReference type="NCBI Taxonomy" id="316279"/>
    <lineage>
        <taxon>Bacteria</taxon>
        <taxon>Bacillati</taxon>
        <taxon>Cyanobacteriota</taxon>
        <taxon>Cyanophyceae</taxon>
        <taxon>Synechococcales</taxon>
        <taxon>Synechococcaceae</taxon>
        <taxon>Synechococcus</taxon>
    </lineage>
</organism>
<proteinExistence type="inferred from homology"/>
<protein>
    <recommendedName>
        <fullName>Acylphosphatase</fullName>
        <ecNumber>3.6.1.7</ecNumber>
    </recommendedName>
    <alternativeName>
        <fullName>Acylphosphate phosphohydrolase</fullName>
    </alternativeName>
</protein>